<feature type="chain" id="PRO_0000184302" description="Ribosomal RNA small subunit methyltransferase G">
    <location>
        <begin position="1"/>
        <end position="253"/>
    </location>
</feature>
<feature type="binding site" evidence="1">
    <location>
        <position position="84"/>
    </location>
    <ligand>
        <name>S-adenosyl-L-methionine</name>
        <dbReference type="ChEBI" id="CHEBI:59789"/>
    </ligand>
</feature>
<feature type="binding site" evidence="1">
    <location>
        <position position="89"/>
    </location>
    <ligand>
        <name>S-adenosyl-L-methionine</name>
        <dbReference type="ChEBI" id="CHEBI:59789"/>
    </ligand>
</feature>
<feature type="binding site" evidence="1">
    <location>
        <begin position="136"/>
        <end position="137"/>
    </location>
    <ligand>
        <name>S-adenosyl-L-methionine</name>
        <dbReference type="ChEBI" id="CHEBI:59789"/>
    </ligand>
</feature>
<feature type="binding site" evidence="1">
    <location>
        <position position="155"/>
    </location>
    <ligand>
        <name>S-adenosyl-L-methionine</name>
        <dbReference type="ChEBI" id="CHEBI:59789"/>
    </ligand>
</feature>
<name>RSMG_PROMA</name>
<dbReference type="EC" id="2.1.1.-" evidence="1"/>
<dbReference type="EMBL" id="AE017126">
    <property type="protein sequence ID" value="AAQ00673.1"/>
    <property type="molecule type" value="Genomic_DNA"/>
</dbReference>
<dbReference type="RefSeq" id="NP_876020.1">
    <property type="nucleotide sequence ID" value="NC_005042.1"/>
</dbReference>
<dbReference type="RefSeq" id="WP_011125779.1">
    <property type="nucleotide sequence ID" value="NC_005042.1"/>
</dbReference>
<dbReference type="SMR" id="Q7VA38"/>
<dbReference type="STRING" id="167539.Pro_1629"/>
<dbReference type="EnsemblBacteria" id="AAQ00673">
    <property type="protein sequence ID" value="AAQ00673"/>
    <property type="gene ID" value="Pro_1629"/>
</dbReference>
<dbReference type="KEGG" id="pma:Pro_1629"/>
<dbReference type="PATRIC" id="fig|167539.5.peg.1721"/>
<dbReference type="eggNOG" id="COG0357">
    <property type="taxonomic scope" value="Bacteria"/>
</dbReference>
<dbReference type="HOGENOM" id="CLU_065341_0_2_3"/>
<dbReference type="OrthoDB" id="9808773at2"/>
<dbReference type="Proteomes" id="UP000001420">
    <property type="component" value="Chromosome"/>
</dbReference>
<dbReference type="GO" id="GO:0005829">
    <property type="term" value="C:cytosol"/>
    <property type="evidence" value="ECO:0007669"/>
    <property type="project" value="TreeGrafter"/>
</dbReference>
<dbReference type="GO" id="GO:0070043">
    <property type="term" value="F:rRNA (guanine-N7-)-methyltransferase activity"/>
    <property type="evidence" value="ECO:0007669"/>
    <property type="project" value="UniProtKB-UniRule"/>
</dbReference>
<dbReference type="Gene3D" id="3.40.50.150">
    <property type="entry name" value="Vaccinia Virus protein VP39"/>
    <property type="match status" value="1"/>
</dbReference>
<dbReference type="HAMAP" id="MF_00074">
    <property type="entry name" value="16SrRNA_methyltr_G"/>
    <property type="match status" value="1"/>
</dbReference>
<dbReference type="InterPro" id="IPR003682">
    <property type="entry name" value="rRNA_ssu_MeTfrase_G"/>
</dbReference>
<dbReference type="InterPro" id="IPR029063">
    <property type="entry name" value="SAM-dependent_MTases_sf"/>
</dbReference>
<dbReference type="NCBIfam" id="TIGR00138">
    <property type="entry name" value="rsmG_gidB"/>
    <property type="match status" value="1"/>
</dbReference>
<dbReference type="PANTHER" id="PTHR31760">
    <property type="entry name" value="S-ADENOSYL-L-METHIONINE-DEPENDENT METHYLTRANSFERASES SUPERFAMILY PROTEIN"/>
    <property type="match status" value="1"/>
</dbReference>
<dbReference type="PANTHER" id="PTHR31760:SF0">
    <property type="entry name" value="S-ADENOSYL-L-METHIONINE-DEPENDENT METHYLTRANSFERASES SUPERFAMILY PROTEIN"/>
    <property type="match status" value="1"/>
</dbReference>
<dbReference type="Pfam" id="PF02527">
    <property type="entry name" value="GidB"/>
    <property type="match status" value="1"/>
</dbReference>
<dbReference type="PIRSF" id="PIRSF003078">
    <property type="entry name" value="GidB"/>
    <property type="match status" value="1"/>
</dbReference>
<dbReference type="SUPFAM" id="SSF53335">
    <property type="entry name" value="S-adenosyl-L-methionine-dependent methyltransferases"/>
    <property type="match status" value="1"/>
</dbReference>
<keyword id="KW-0963">Cytoplasm</keyword>
<keyword id="KW-0489">Methyltransferase</keyword>
<keyword id="KW-1185">Reference proteome</keyword>
<keyword id="KW-0698">rRNA processing</keyword>
<keyword id="KW-0949">S-adenosyl-L-methionine</keyword>
<keyword id="KW-0808">Transferase</keyword>
<comment type="function">
    <text evidence="1">Specifically methylates the N7 position of a guanine in 16S rRNA.</text>
</comment>
<comment type="subcellular location">
    <subcellularLocation>
        <location evidence="1">Cytoplasm</location>
    </subcellularLocation>
</comment>
<comment type="similarity">
    <text evidence="1">Belongs to the methyltransferase superfamily. RNA methyltransferase RsmG family.</text>
</comment>
<protein>
    <recommendedName>
        <fullName evidence="1">Ribosomal RNA small subunit methyltransferase G</fullName>
        <ecNumber evidence="1">2.1.1.-</ecNumber>
    </recommendedName>
    <alternativeName>
        <fullName evidence="1">16S rRNA 7-methylguanosine methyltransferase</fullName>
        <shortName evidence="1">16S rRNA m7G methyltransferase</shortName>
    </alternativeName>
</protein>
<sequence length="253" mass="29043">MTNQKKFKRQETQIWQHLQWEPSPQQLEQFNQLQYLLREWNQKINLTRLIEGNDFWISQILDSLWPIQDELKFQDKQINIIDVGTGCGLPGLAVAIALPRSSTTLIDSIYRKTSAVKEIVKELGLLSRVNVLTERIELTGQKKLHRHTFDLAIARAVAKAPVLAEYLIPFLKPTGQAVMYKGKWNDLEKKELLKALSKLKGKIDTTKSLELPERRGIRHAIRISSTMLCPGKYPRSVGIPLKRPLNNQTSDNL</sequence>
<accession>Q7VA38</accession>
<gene>
    <name evidence="1" type="primary">rsmG</name>
    <name type="ordered locus">Pro_1629</name>
</gene>
<evidence type="ECO:0000255" key="1">
    <source>
        <dbReference type="HAMAP-Rule" id="MF_00074"/>
    </source>
</evidence>
<proteinExistence type="inferred from homology"/>
<reference key="1">
    <citation type="journal article" date="2003" name="Proc. Natl. Acad. Sci. U.S.A.">
        <title>Genome sequence of the cyanobacterium Prochlorococcus marinus SS120, a nearly minimal oxyphototrophic genome.</title>
        <authorList>
            <person name="Dufresne A."/>
            <person name="Salanoubat M."/>
            <person name="Partensky F."/>
            <person name="Artiguenave F."/>
            <person name="Axmann I.M."/>
            <person name="Barbe V."/>
            <person name="Duprat S."/>
            <person name="Galperin M.Y."/>
            <person name="Koonin E.V."/>
            <person name="Le Gall F."/>
            <person name="Makarova K.S."/>
            <person name="Ostrowski M."/>
            <person name="Oztas S."/>
            <person name="Robert C."/>
            <person name="Rogozin I.B."/>
            <person name="Scanlan D.J."/>
            <person name="Tandeau de Marsac N."/>
            <person name="Weissenbach J."/>
            <person name="Wincker P."/>
            <person name="Wolf Y.I."/>
            <person name="Hess W.R."/>
        </authorList>
    </citation>
    <scope>NUCLEOTIDE SEQUENCE [LARGE SCALE GENOMIC DNA]</scope>
    <source>
        <strain>SARG / CCMP1375 / SS120</strain>
    </source>
</reference>
<organism>
    <name type="scientific">Prochlorococcus marinus (strain SARG / CCMP1375 / SS120)</name>
    <dbReference type="NCBI Taxonomy" id="167539"/>
    <lineage>
        <taxon>Bacteria</taxon>
        <taxon>Bacillati</taxon>
        <taxon>Cyanobacteriota</taxon>
        <taxon>Cyanophyceae</taxon>
        <taxon>Synechococcales</taxon>
        <taxon>Prochlorococcaceae</taxon>
        <taxon>Prochlorococcus</taxon>
    </lineage>
</organism>